<accession>B7LK92</accession>
<organism>
    <name type="scientific">Escherichia fergusonii (strain ATCC 35469 / DSM 13698 / CCUG 18766 / IAM 14443 / JCM 21226 / LMG 7866 / NBRC 102419 / NCTC 12128 / CDC 0568-73)</name>
    <dbReference type="NCBI Taxonomy" id="585054"/>
    <lineage>
        <taxon>Bacteria</taxon>
        <taxon>Pseudomonadati</taxon>
        <taxon>Pseudomonadota</taxon>
        <taxon>Gammaproteobacteria</taxon>
        <taxon>Enterobacterales</taxon>
        <taxon>Enterobacteriaceae</taxon>
        <taxon>Escherichia</taxon>
    </lineage>
</organism>
<reference key="1">
    <citation type="journal article" date="2009" name="PLoS Genet.">
        <title>Organised genome dynamics in the Escherichia coli species results in highly diverse adaptive paths.</title>
        <authorList>
            <person name="Touchon M."/>
            <person name="Hoede C."/>
            <person name="Tenaillon O."/>
            <person name="Barbe V."/>
            <person name="Baeriswyl S."/>
            <person name="Bidet P."/>
            <person name="Bingen E."/>
            <person name="Bonacorsi S."/>
            <person name="Bouchier C."/>
            <person name="Bouvet O."/>
            <person name="Calteau A."/>
            <person name="Chiapello H."/>
            <person name="Clermont O."/>
            <person name="Cruveiller S."/>
            <person name="Danchin A."/>
            <person name="Diard M."/>
            <person name="Dossat C."/>
            <person name="Karoui M.E."/>
            <person name="Frapy E."/>
            <person name="Garry L."/>
            <person name="Ghigo J.M."/>
            <person name="Gilles A.M."/>
            <person name="Johnson J."/>
            <person name="Le Bouguenec C."/>
            <person name="Lescat M."/>
            <person name="Mangenot S."/>
            <person name="Martinez-Jehanne V."/>
            <person name="Matic I."/>
            <person name="Nassif X."/>
            <person name="Oztas S."/>
            <person name="Petit M.A."/>
            <person name="Pichon C."/>
            <person name="Rouy Z."/>
            <person name="Ruf C.S."/>
            <person name="Schneider D."/>
            <person name="Tourret J."/>
            <person name="Vacherie B."/>
            <person name="Vallenet D."/>
            <person name="Medigue C."/>
            <person name="Rocha E.P.C."/>
            <person name="Denamur E."/>
        </authorList>
    </citation>
    <scope>NUCLEOTIDE SEQUENCE [LARGE SCALE GENOMIC DNA]</scope>
    <source>
        <strain>ATCC 35469 / DSM 13698 / BCRC 15582 / CCUG 18766 / IAM 14443 / JCM 21226 / LMG 7866 / NBRC 102419 / NCTC 12128 / CDC 0568-73</strain>
    </source>
</reference>
<name>KUP_ESCF3</name>
<dbReference type="EMBL" id="CU928158">
    <property type="protein sequence ID" value="CAQ91480.1"/>
    <property type="molecule type" value="Genomic_DNA"/>
</dbReference>
<dbReference type="RefSeq" id="WP_000102682.1">
    <property type="nucleotide sequence ID" value="NC_011740.1"/>
</dbReference>
<dbReference type="GeneID" id="75059640"/>
<dbReference type="KEGG" id="efe:EFER_4046"/>
<dbReference type="HOGENOM" id="CLU_008142_4_2_6"/>
<dbReference type="OrthoDB" id="9805577at2"/>
<dbReference type="Proteomes" id="UP000000745">
    <property type="component" value="Chromosome"/>
</dbReference>
<dbReference type="GO" id="GO:0005886">
    <property type="term" value="C:plasma membrane"/>
    <property type="evidence" value="ECO:0007669"/>
    <property type="project" value="UniProtKB-SubCell"/>
</dbReference>
<dbReference type="GO" id="GO:0015079">
    <property type="term" value="F:potassium ion transmembrane transporter activity"/>
    <property type="evidence" value="ECO:0007669"/>
    <property type="project" value="UniProtKB-UniRule"/>
</dbReference>
<dbReference type="GO" id="GO:0015293">
    <property type="term" value="F:symporter activity"/>
    <property type="evidence" value="ECO:0007669"/>
    <property type="project" value="UniProtKB-UniRule"/>
</dbReference>
<dbReference type="HAMAP" id="MF_01522">
    <property type="entry name" value="Kup"/>
    <property type="match status" value="1"/>
</dbReference>
<dbReference type="InterPro" id="IPR003855">
    <property type="entry name" value="K+_transporter"/>
</dbReference>
<dbReference type="InterPro" id="IPR053952">
    <property type="entry name" value="K_trans_C"/>
</dbReference>
<dbReference type="InterPro" id="IPR053951">
    <property type="entry name" value="K_trans_N"/>
</dbReference>
<dbReference type="InterPro" id="IPR023051">
    <property type="entry name" value="Kup"/>
</dbReference>
<dbReference type="NCBIfam" id="TIGR00794">
    <property type="entry name" value="kup"/>
    <property type="match status" value="1"/>
</dbReference>
<dbReference type="NCBIfam" id="NF008015">
    <property type="entry name" value="PRK10745.1"/>
    <property type="match status" value="1"/>
</dbReference>
<dbReference type="PANTHER" id="PTHR30540:SF79">
    <property type="entry name" value="LOW AFFINITY POTASSIUM TRANSPORT SYSTEM PROTEIN KUP"/>
    <property type="match status" value="1"/>
</dbReference>
<dbReference type="PANTHER" id="PTHR30540">
    <property type="entry name" value="OSMOTIC STRESS POTASSIUM TRANSPORTER"/>
    <property type="match status" value="1"/>
</dbReference>
<dbReference type="Pfam" id="PF02705">
    <property type="entry name" value="K_trans"/>
    <property type="match status" value="1"/>
</dbReference>
<dbReference type="Pfam" id="PF22776">
    <property type="entry name" value="K_trans_C"/>
    <property type="match status" value="1"/>
</dbReference>
<gene>
    <name evidence="1" type="primary">kup</name>
    <name type="ordered locus">EFER_4046</name>
</gene>
<keyword id="KW-0997">Cell inner membrane</keyword>
<keyword id="KW-1003">Cell membrane</keyword>
<keyword id="KW-0406">Ion transport</keyword>
<keyword id="KW-0472">Membrane</keyword>
<keyword id="KW-0630">Potassium</keyword>
<keyword id="KW-0633">Potassium transport</keyword>
<keyword id="KW-0769">Symport</keyword>
<keyword id="KW-0812">Transmembrane</keyword>
<keyword id="KW-1133">Transmembrane helix</keyword>
<keyword id="KW-0813">Transport</keyword>
<protein>
    <recommendedName>
        <fullName evidence="1">Low affinity potassium transport system protein Kup</fullName>
    </recommendedName>
    <alternativeName>
        <fullName evidence="1">Kup system potassium uptake protein</fullName>
    </alternativeName>
</protein>
<feature type="chain" id="PRO_1000190270" description="Low affinity potassium transport system protein Kup">
    <location>
        <begin position="1"/>
        <end position="622"/>
    </location>
</feature>
<feature type="transmembrane region" description="Helical" evidence="1">
    <location>
        <begin position="9"/>
        <end position="29"/>
    </location>
</feature>
<feature type="transmembrane region" description="Helical" evidence="1">
    <location>
        <begin position="49"/>
        <end position="69"/>
    </location>
</feature>
<feature type="transmembrane region" description="Helical" evidence="1">
    <location>
        <begin position="103"/>
        <end position="123"/>
    </location>
</feature>
<feature type="transmembrane region" description="Helical" evidence="1">
    <location>
        <begin position="137"/>
        <end position="157"/>
    </location>
</feature>
<feature type="transmembrane region" description="Helical" evidence="1">
    <location>
        <begin position="165"/>
        <end position="185"/>
    </location>
</feature>
<feature type="transmembrane region" description="Helical" evidence="1">
    <location>
        <begin position="213"/>
        <end position="233"/>
    </location>
</feature>
<feature type="transmembrane region" description="Helical" evidence="1">
    <location>
        <begin position="247"/>
        <end position="267"/>
    </location>
</feature>
<feature type="transmembrane region" description="Helical" evidence="1">
    <location>
        <begin position="276"/>
        <end position="296"/>
    </location>
</feature>
<feature type="transmembrane region" description="Helical" evidence="1">
    <location>
        <begin position="337"/>
        <end position="357"/>
    </location>
</feature>
<feature type="transmembrane region" description="Helical" evidence="1">
    <location>
        <begin position="363"/>
        <end position="383"/>
    </location>
</feature>
<feature type="transmembrane region" description="Helical" evidence="1">
    <location>
        <begin position="396"/>
        <end position="416"/>
    </location>
</feature>
<feature type="transmembrane region" description="Helical" evidence="1">
    <location>
        <begin position="419"/>
        <end position="439"/>
    </location>
</feature>
<proteinExistence type="inferred from homology"/>
<evidence type="ECO:0000255" key="1">
    <source>
        <dbReference type="HAMAP-Rule" id="MF_01522"/>
    </source>
</evidence>
<sequence length="622" mass="69308">MSTENKQSLPAITLAAIGVVYGDIGTSPLYTLRECLSGQFGFGVERDAVFGFLSLIFWLLIFVVSIKYLTFVMRADNAGEGGILTLMSLAGRNTSARTTSMLVIMGLIGGSFFYGEVVITPAISVMSAIEGLEIVAPQLDTWIVPLSIIVLTLLFMIQKHGTAMVGKLFAPIMLTWFLILAGLGLRSIIANPEVLHALNPMWAVHFFLEYKTVSFIALGAVVLSITGVEALYADMGHFGKFPIRLAWFTVVLPSLTLNYFGQGALLLKNPEAIKNPFFLLAPDWALIPLLIIAALATVIASQAVISGVFSLTRQAVRLGYLSPMRIIHTSEMESGQIYIPFVNWMLYVAVVIVIVSFEHSSNLAAAYGIAVTGTMVLTSILSTTVARQNWHWNKYFVALILIAFLCVDIPLFTANLDKLLSGGWLPLSLGTVMFIVMTTWKSERFRLLRRMHEHGNSLEAMIASLEKSPPVRVPGTAVYMSRAINVIPFALMHNLKHNKVLHERVILLTLRTEDAPYVHNVRRVQIEQLSPTFWRVVASYGWRETPNVEEVFHRCGLEGLSCRMMETSFFMSHESLILGKRPWYLRLRGKLYLLLQRNALRAPDQFEIPPNRVIELGTQVEI</sequence>
<comment type="function">
    <text evidence="1">Responsible for the low-affinity transport of potassium into the cell. Likely operates as a K(+):H(+) symporter.</text>
</comment>
<comment type="catalytic activity">
    <reaction evidence="1">
        <text>K(+)(in) + H(+)(in) = K(+)(out) + H(+)(out)</text>
        <dbReference type="Rhea" id="RHEA:28490"/>
        <dbReference type="ChEBI" id="CHEBI:15378"/>
        <dbReference type="ChEBI" id="CHEBI:29103"/>
    </reaction>
    <physiologicalReaction direction="right-to-left" evidence="1">
        <dbReference type="Rhea" id="RHEA:28492"/>
    </physiologicalReaction>
</comment>
<comment type="subcellular location">
    <subcellularLocation>
        <location evidence="1">Cell inner membrane</location>
        <topology evidence="1">Multi-pass membrane protein</topology>
    </subcellularLocation>
</comment>
<comment type="similarity">
    <text evidence="1">Belongs to the HAK/KUP transporter (TC 2.A.72) family.</text>
</comment>